<feature type="signal peptide" evidence="2">
    <location>
        <begin position="1"/>
        <end position="17"/>
    </location>
</feature>
<feature type="propeptide" id="PRO_0000407457" evidence="1">
    <location>
        <begin position="18"/>
        <end position="124"/>
    </location>
</feature>
<feature type="chain" id="PRO_0000407458" description="Carboxypeptidase Y homolog A">
    <location>
        <begin position="125"/>
        <end position="543"/>
    </location>
</feature>
<feature type="active site" evidence="3">
    <location>
        <position position="266"/>
    </location>
</feature>
<feature type="active site" evidence="3">
    <location>
        <position position="458"/>
    </location>
</feature>
<feature type="active site" evidence="3">
    <location>
        <position position="520"/>
    </location>
</feature>
<feature type="glycosylation site" description="N-linked (GlcNAc...) asparagine" evidence="2">
    <location>
        <position position="210"/>
    </location>
</feature>
<feature type="glycosylation site" description="N-linked (GlcNAc...) asparagine" evidence="2">
    <location>
        <position position="509"/>
    </location>
</feature>
<feature type="disulfide bond" evidence="1">
    <location>
        <begin position="179"/>
        <end position="419"/>
    </location>
</feature>
<feature type="disulfide bond" evidence="1">
    <location>
        <begin position="313"/>
        <end position="327"/>
    </location>
</feature>
<feature type="disulfide bond" evidence="1">
    <location>
        <begin position="337"/>
        <end position="360"/>
    </location>
</feature>
<feature type="disulfide bond" evidence="1">
    <location>
        <begin position="344"/>
        <end position="353"/>
    </location>
</feature>
<feature type="disulfide bond" evidence="1">
    <location>
        <begin position="382"/>
        <end position="389"/>
    </location>
</feature>
<gene>
    <name type="primary">cpyA</name>
    <name type="ORF">NFIA_059500</name>
</gene>
<name>CBPYA_NEOFI</name>
<protein>
    <recommendedName>
        <fullName>Carboxypeptidase Y homolog A</fullName>
        <ecNumber>3.4.16.5</ecNumber>
    </recommendedName>
</protein>
<organism>
    <name type="scientific">Neosartorya fischeri (strain ATCC 1020 / DSM 3700 / CBS 544.65 / FGSC A1164 / JCM 1740 / NRRL 181 / WB 181)</name>
    <name type="common">Aspergillus fischerianus</name>
    <dbReference type="NCBI Taxonomy" id="331117"/>
    <lineage>
        <taxon>Eukaryota</taxon>
        <taxon>Fungi</taxon>
        <taxon>Dikarya</taxon>
        <taxon>Ascomycota</taxon>
        <taxon>Pezizomycotina</taxon>
        <taxon>Eurotiomycetes</taxon>
        <taxon>Eurotiomycetidae</taxon>
        <taxon>Eurotiales</taxon>
        <taxon>Aspergillaceae</taxon>
        <taxon>Aspergillus</taxon>
        <taxon>Aspergillus subgen. Fumigati</taxon>
    </lineage>
</organism>
<evidence type="ECO:0000250" key="1"/>
<evidence type="ECO:0000255" key="2"/>
<evidence type="ECO:0000255" key="3">
    <source>
        <dbReference type="PROSITE-ProRule" id="PRU10074"/>
    </source>
</evidence>
<evidence type="ECO:0000305" key="4"/>
<dbReference type="EC" id="3.4.16.5"/>
<dbReference type="EMBL" id="DS027698">
    <property type="protein sequence ID" value="EAW16596.1"/>
    <property type="molecule type" value="Genomic_DNA"/>
</dbReference>
<dbReference type="RefSeq" id="XP_001258493.1">
    <property type="nucleotide sequence ID" value="XM_001258492.1"/>
</dbReference>
<dbReference type="SMR" id="A1DP75"/>
<dbReference type="STRING" id="331117.A1DP75"/>
<dbReference type="ESTHER" id="aspfu-CBPYA">
    <property type="family name" value="Carboxypeptidase_S10"/>
</dbReference>
<dbReference type="MEROPS" id="S10.001"/>
<dbReference type="GlyCosmos" id="A1DP75">
    <property type="glycosylation" value="2 sites, No reported glycans"/>
</dbReference>
<dbReference type="EnsemblFungi" id="EAW16596">
    <property type="protein sequence ID" value="EAW16596"/>
    <property type="gene ID" value="NFIA_059500"/>
</dbReference>
<dbReference type="GeneID" id="4585009"/>
<dbReference type="KEGG" id="nfi:NFIA_059500"/>
<dbReference type="VEuPathDB" id="FungiDB:NFIA_059500"/>
<dbReference type="eggNOG" id="KOG1282">
    <property type="taxonomic scope" value="Eukaryota"/>
</dbReference>
<dbReference type="HOGENOM" id="CLU_008523_10_4_1"/>
<dbReference type="OMA" id="GDWMKPF"/>
<dbReference type="OrthoDB" id="443318at2759"/>
<dbReference type="Proteomes" id="UP000006702">
    <property type="component" value="Unassembled WGS sequence"/>
</dbReference>
<dbReference type="GO" id="GO:0000324">
    <property type="term" value="C:fungal-type vacuole"/>
    <property type="evidence" value="ECO:0007669"/>
    <property type="project" value="TreeGrafter"/>
</dbReference>
<dbReference type="GO" id="GO:0004185">
    <property type="term" value="F:serine-type carboxypeptidase activity"/>
    <property type="evidence" value="ECO:0007669"/>
    <property type="project" value="UniProtKB-EC"/>
</dbReference>
<dbReference type="GO" id="GO:0006508">
    <property type="term" value="P:proteolysis"/>
    <property type="evidence" value="ECO:0007669"/>
    <property type="project" value="UniProtKB-KW"/>
</dbReference>
<dbReference type="FunFam" id="1.10.287.410:FF:000001">
    <property type="entry name" value="Carboxypeptidase Y"/>
    <property type="match status" value="1"/>
</dbReference>
<dbReference type="Gene3D" id="1.10.287.410">
    <property type="match status" value="1"/>
</dbReference>
<dbReference type="Gene3D" id="3.40.50.1820">
    <property type="entry name" value="alpha/beta hydrolase"/>
    <property type="match status" value="1"/>
</dbReference>
<dbReference type="InterPro" id="IPR029058">
    <property type="entry name" value="AB_hydrolase_fold"/>
</dbReference>
<dbReference type="InterPro" id="IPR001563">
    <property type="entry name" value="Peptidase_S10"/>
</dbReference>
<dbReference type="InterPro" id="IPR008442">
    <property type="entry name" value="Propeptide_carboxypepY"/>
</dbReference>
<dbReference type="InterPro" id="IPR018202">
    <property type="entry name" value="Ser_caboxypep_ser_AS"/>
</dbReference>
<dbReference type="PANTHER" id="PTHR11802:SF113">
    <property type="entry name" value="SERINE CARBOXYPEPTIDASE CTSA-4.1"/>
    <property type="match status" value="1"/>
</dbReference>
<dbReference type="PANTHER" id="PTHR11802">
    <property type="entry name" value="SERINE PROTEASE FAMILY S10 SERINE CARBOXYPEPTIDASE"/>
    <property type="match status" value="1"/>
</dbReference>
<dbReference type="Pfam" id="PF05388">
    <property type="entry name" value="Carbpep_Y_N"/>
    <property type="match status" value="1"/>
</dbReference>
<dbReference type="Pfam" id="PF00450">
    <property type="entry name" value="Peptidase_S10"/>
    <property type="match status" value="1"/>
</dbReference>
<dbReference type="PRINTS" id="PR00724">
    <property type="entry name" value="CRBOXYPTASEC"/>
</dbReference>
<dbReference type="SUPFAM" id="SSF53474">
    <property type="entry name" value="alpha/beta-Hydrolases"/>
    <property type="match status" value="1"/>
</dbReference>
<dbReference type="PROSITE" id="PS00131">
    <property type="entry name" value="CARBOXYPEPT_SER_SER"/>
    <property type="match status" value="1"/>
</dbReference>
<reference key="1">
    <citation type="journal article" date="2008" name="PLoS Genet.">
        <title>Genomic islands in the pathogenic filamentous fungus Aspergillus fumigatus.</title>
        <authorList>
            <person name="Fedorova N.D."/>
            <person name="Khaldi N."/>
            <person name="Joardar V.S."/>
            <person name="Maiti R."/>
            <person name="Amedeo P."/>
            <person name="Anderson M.J."/>
            <person name="Crabtree J."/>
            <person name="Silva J.C."/>
            <person name="Badger J.H."/>
            <person name="Albarraq A."/>
            <person name="Angiuoli S."/>
            <person name="Bussey H."/>
            <person name="Bowyer P."/>
            <person name="Cotty P.J."/>
            <person name="Dyer P.S."/>
            <person name="Egan A."/>
            <person name="Galens K."/>
            <person name="Fraser-Liggett C.M."/>
            <person name="Haas B.J."/>
            <person name="Inman J.M."/>
            <person name="Kent R."/>
            <person name="Lemieux S."/>
            <person name="Malavazi I."/>
            <person name="Orvis J."/>
            <person name="Roemer T."/>
            <person name="Ronning C.M."/>
            <person name="Sundaram J.P."/>
            <person name="Sutton G."/>
            <person name="Turner G."/>
            <person name="Venter J.C."/>
            <person name="White O.R."/>
            <person name="Whitty B.R."/>
            <person name="Youngman P."/>
            <person name="Wolfe K.H."/>
            <person name="Goldman G.H."/>
            <person name="Wortman J.R."/>
            <person name="Jiang B."/>
            <person name="Denning D.W."/>
            <person name="Nierman W.C."/>
        </authorList>
    </citation>
    <scope>NUCLEOTIDE SEQUENCE [LARGE SCALE GENOMIC DNA]</scope>
    <source>
        <strain>ATCC 1020 / DSM 3700 / CBS 544.65 / FGSC A1164 / JCM 1740 / NRRL 181 / WB 181</strain>
    </source>
</reference>
<sequence>MRVLPATLLVGAATAAAPPFQQILGLPKKGADTLAKPLHDLQEQLKTLSGEARHLWDEVANHFPNNMDHNPVFSLPKKHTRRPDSHWDHIVRGADVQSVWVTGASGEKEREIDGKLEAYDLRVKKTDPSALGIDPGVKQYTGYLDDNENDKHLFYWFFESRNDPKNDPVVLWLNGGPGCSSLTGLFLELGPSSINEKIKPIYNDFAWNSNASVIFLDQPVNVGYSYSGAAVSDTVAAGKDVYALLTLFFKQFPEYAKQDFHIAGESYAGHYIPVFASEILSHKKRNINLKSVLIGNGLTDGLTQYDYYRPMACGEGGYPAVLDEASCQSMDNALPRCKSMIESCYNTESSWICVPASIYCNNALLGPYQRTGQNVYDIRGKCEDTSNLCYKGMGYVSEYLNKREVREAVGAEVDGYESCNFDINRNFLFHGDWMKPYHRLVPGLLEQIPVLIYAGDADFICNWLGNKAWTEALEWPGQKEYAPLPLKDLVIEENEHKGKKIGQIKSHGNFTFMRLYGAGHMVPMDQPEASLEFFNRWLGGEWF</sequence>
<comment type="function">
    <text evidence="1">Vacuolar carboxypeptidase involved in degradation of small peptides. Digests preferentially peptides containing an aliphatic or hydrophobic residue in P1' position, as well as methionine, leucine or phenylalanine in P1 position of ester substrate (By similarity).</text>
</comment>
<comment type="catalytic activity">
    <reaction evidence="3">
        <text>Release of a C-terminal amino acid with broad specificity.</text>
        <dbReference type="EC" id="3.4.16.5"/>
    </reaction>
</comment>
<comment type="subcellular location">
    <subcellularLocation>
        <location evidence="1">Vacuole</location>
    </subcellularLocation>
</comment>
<comment type="similarity">
    <text evidence="4">Belongs to the peptidase S10 family.</text>
</comment>
<accession>A1DP75</accession>
<keyword id="KW-0121">Carboxypeptidase</keyword>
<keyword id="KW-1015">Disulfide bond</keyword>
<keyword id="KW-0325">Glycoprotein</keyword>
<keyword id="KW-0378">Hydrolase</keyword>
<keyword id="KW-0645">Protease</keyword>
<keyword id="KW-1185">Reference proteome</keyword>
<keyword id="KW-0732">Signal</keyword>
<keyword id="KW-0926">Vacuole</keyword>
<keyword id="KW-0865">Zymogen</keyword>
<proteinExistence type="inferred from homology"/>